<sequence>MIVGHGIDLQEISAIEKVYQRNPRFAQKILTEQELAIFESFPYKRRLSYLAGRWSGKEAFAKAIGTGIGRLTFQDIEILNDVRGCPILTKSPFKGNSFISISHSGNYVQASVILEDKK</sequence>
<reference key="1">
    <citation type="journal article" date="2008" name="J. Bacteriol.">
        <title>Genome sequence of a nephritogenic and highly transformable M49 strain of Streptococcus pyogenes.</title>
        <authorList>
            <person name="McShan W.M."/>
            <person name="Ferretti J.J."/>
            <person name="Karasawa T."/>
            <person name="Suvorov A.N."/>
            <person name="Lin S."/>
            <person name="Qin B."/>
            <person name="Jia H."/>
            <person name="Kenton S."/>
            <person name="Najar F."/>
            <person name="Wu H."/>
            <person name="Scott J."/>
            <person name="Roe B.A."/>
            <person name="Savic D.J."/>
        </authorList>
    </citation>
    <scope>NUCLEOTIDE SEQUENCE [LARGE SCALE GENOMIC DNA]</scope>
    <source>
        <strain>NZ131</strain>
    </source>
</reference>
<dbReference type="EC" id="2.7.8.7" evidence="1"/>
<dbReference type="EMBL" id="CP000829">
    <property type="protein sequence ID" value="ACI61684.1"/>
    <property type="molecule type" value="Genomic_DNA"/>
</dbReference>
<dbReference type="SMR" id="B5XI22"/>
<dbReference type="KEGG" id="soz:Spy49_1409c"/>
<dbReference type="HOGENOM" id="CLU_089696_1_2_9"/>
<dbReference type="Proteomes" id="UP000001039">
    <property type="component" value="Chromosome"/>
</dbReference>
<dbReference type="GO" id="GO:0005737">
    <property type="term" value="C:cytoplasm"/>
    <property type="evidence" value="ECO:0007669"/>
    <property type="project" value="UniProtKB-SubCell"/>
</dbReference>
<dbReference type="GO" id="GO:0008897">
    <property type="term" value="F:holo-[acyl-carrier-protein] synthase activity"/>
    <property type="evidence" value="ECO:0007669"/>
    <property type="project" value="UniProtKB-UniRule"/>
</dbReference>
<dbReference type="GO" id="GO:0000287">
    <property type="term" value="F:magnesium ion binding"/>
    <property type="evidence" value="ECO:0007669"/>
    <property type="project" value="UniProtKB-UniRule"/>
</dbReference>
<dbReference type="GO" id="GO:0006633">
    <property type="term" value="P:fatty acid biosynthetic process"/>
    <property type="evidence" value="ECO:0007669"/>
    <property type="project" value="UniProtKB-UniRule"/>
</dbReference>
<dbReference type="Gene3D" id="3.90.470.20">
    <property type="entry name" value="4'-phosphopantetheinyl transferase domain"/>
    <property type="match status" value="1"/>
</dbReference>
<dbReference type="HAMAP" id="MF_00101">
    <property type="entry name" value="AcpS"/>
    <property type="match status" value="1"/>
</dbReference>
<dbReference type="InterPro" id="IPR008278">
    <property type="entry name" value="4-PPantetheinyl_Trfase_dom"/>
</dbReference>
<dbReference type="InterPro" id="IPR037143">
    <property type="entry name" value="4-PPantetheinyl_Trfase_dom_sf"/>
</dbReference>
<dbReference type="InterPro" id="IPR002582">
    <property type="entry name" value="ACPS"/>
</dbReference>
<dbReference type="InterPro" id="IPR004568">
    <property type="entry name" value="Ppantetheine-prot_Trfase_dom"/>
</dbReference>
<dbReference type="NCBIfam" id="TIGR00516">
    <property type="entry name" value="acpS"/>
    <property type="match status" value="1"/>
</dbReference>
<dbReference type="NCBIfam" id="TIGR00556">
    <property type="entry name" value="pantethn_trn"/>
    <property type="match status" value="1"/>
</dbReference>
<dbReference type="Pfam" id="PF01648">
    <property type="entry name" value="ACPS"/>
    <property type="match status" value="1"/>
</dbReference>
<dbReference type="SUPFAM" id="SSF56214">
    <property type="entry name" value="4'-phosphopantetheinyl transferase"/>
    <property type="match status" value="1"/>
</dbReference>
<protein>
    <recommendedName>
        <fullName evidence="1">Holo-[acyl-carrier-protein] synthase</fullName>
        <shortName evidence="1">Holo-ACP synthase</shortName>
        <ecNumber evidence="1">2.7.8.7</ecNumber>
    </recommendedName>
    <alternativeName>
        <fullName evidence="1">4'-phosphopantetheinyl transferase AcpS</fullName>
    </alternativeName>
</protein>
<organism>
    <name type="scientific">Streptococcus pyogenes serotype M49 (strain NZ131)</name>
    <dbReference type="NCBI Taxonomy" id="471876"/>
    <lineage>
        <taxon>Bacteria</taxon>
        <taxon>Bacillati</taxon>
        <taxon>Bacillota</taxon>
        <taxon>Bacilli</taxon>
        <taxon>Lactobacillales</taxon>
        <taxon>Streptococcaceae</taxon>
        <taxon>Streptococcus</taxon>
    </lineage>
</organism>
<accession>B5XI22</accession>
<comment type="function">
    <text evidence="1">Transfers the 4'-phosphopantetheine moiety from coenzyme A to a Ser of acyl-carrier-protein.</text>
</comment>
<comment type="catalytic activity">
    <reaction evidence="1">
        <text>apo-[ACP] + CoA = holo-[ACP] + adenosine 3',5'-bisphosphate + H(+)</text>
        <dbReference type="Rhea" id="RHEA:12068"/>
        <dbReference type="Rhea" id="RHEA-COMP:9685"/>
        <dbReference type="Rhea" id="RHEA-COMP:9690"/>
        <dbReference type="ChEBI" id="CHEBI:15378"/>
        <dbReference type="ChEBI" id="CHEBI:29999"/>
        <dbReference type="ChEBI" id="CHEBI:57287"/>
        <dbReference type="ChEBI" id="CHEBI:58343"/>
        <dbReference type="ChEBI" id="CHEBI:64479"/>
        <dbReference type="EC" id="2.7.8.7"/>
    </reaction>
</comment>
<comment type="cofactor">
    <cofactor evidence="1">
        <name>Mg(2+)</name>
        <dbReference type="ChEBI" id="CHEBI:18420"/>
    </cofactor>
</comment>
<comment type="subcellular location">
    <subcellularLocation>
        <location evidence="1">Cytoplasm</location>
    </subcellularLocation>
</comment>
<comment type="similarity">
    <text evidence="1">Belongs to the P-Pant transferase superfamily. AcpS family.</text>
</comment>
<evidence type="ECO:0000255" key="1">
    <source>
        <dbReference type="HAMAP-Rule" id="MF_00101"/>
    </source>
</evidence>
<feature type="chain" id="PRO_1000093923" description="Holo-[acyl-carrier-protein] synthase">
    <location>
        <begin position="1"/>
        <end position="118"/>
    </location>
</feature>
<feature type="binding site" evidence="1">
    <location>
        <position position="8"/>
    </location>
    <ligand>
        <name>Mg(2+)</name>
        <dbReference type="ChEBI" id="CHEBI:18420"/>
    </ligand>
</feature>
<feature type="binding site" evidence="1">
    <location>
        <position position="58"/>
    </location>
    <ligand>
        <name>Mg(2+)</name>
        <dbReference type="ChEBI" id="CHEBI:18420"/>
    </ligand>
</feature>
<gene>
    <name evidence="1" type="primary">acpS</name>
    <name type="ordered locus">Spy49_1409c</name>
</gene>
<name>ACPS_STRPZ</name>
<keyword id="KW-0963">Cytoplasm</keyword>
<keyword id="KW-0275">Fatty acid biosynthesis</keyword>
<keyword id="KW-0276">Fatty acid metabolism</keyword>
<keyword id="KW-0444">Lipid biosynthesis</keyword>
<keyword id="KW-0443">Lipid metabolism</keyword>
<keyword id="KW-0460">Magnesium</keyword>
<keyword id="KW-0479">Metal-binding</keyword>
<keyword id="KW-0808">Transferase</keyword>
<proteinExistence type="inferred from homology"/>